<name>Y621_METJA</name>
<dbReference type="EMBL" id="L77117">
    <property type="protein sequence ID" value="AAB98616.1"/>
    <property type="molecule type" value="Genomic_DNA"/>
</dbReference>
<dbReference type="PIR" id="E64377">
    <property type="entry name" value="E64377"/>
</dbReference>
<dbReference type="RefSeq" id="WP_010870126.1">
    <property type="nucleotide sequence ID" value="NC_000909.1"/>
</dbReference>
<dbReference type="SMR" id="Q58038"/>
<dbReference type="PaxDb" id="243232-MJ_0621"/>
<dbReference type="EnsemblBacteria" id="AAB98616">
    <property type="protein sequence ID" value="AAB98616"/>
    <property type="gene ID" value="MJ_0621"/>
</dbReference>
<dbReference type="GeneID" id="1451487"/>
<dbReference type="KEGG" id="mja:MJ_0621"/>
<dbReference type="eggNOG" id="arCOG04375">
    <property type="taxonomic scope" value="Archaea"/>
</dbReference>
<dbReference type="HOGENOM" id="CLU_129113_0_0_2"/>
<dbReference type="InParanoid" id="Q58038"/>
<dbReference type="OrthoDB" id="350214at2157"/>
<dbReference type="PhylomeDB" id="Q58038"/>
<dbReference type="Proteomes" id="UP000000805">
    <property type="component" value="Chromosome"/>
</dbReference>
<dbReference type="GO" id="GO:0003677">
    <property type="term" value="F:DNA binding"/>
    <property type="evidence" value="ECO:0007669"/>
    <property type="project" value="UniProtKB-KW"/>
</dbReference>
<dbReference type="CDD" id="cd00093">
    <property type="entry name" value="HTH_XRE"/>
    <property type="match status" value="1"/>
</dbReference>
<dbReference type="Gene3D" id="1.10.260.40">
    <property type="entry name" value="lambda repressor-like DNA-binding domains"/>
    <property type="match status" value="1"/>
</dbReference>
<dbReference type="InterPro" id="IPR001387">
    <property type="entry name" value="Cro/C1-type_HTH"/>
</dbReference>
<dbReference type="InterPro" id="IPR010982">
    <property type="entry name" value="Lambda_DNA-bd_dom_sf"/>
</dbReference>
<dbReference type="InterPro" id="IPR016472">
    <property type="entry name" value="Tscrpt_reg_MJ0621_prd"/>
</dbReference>
<dbReference type="Pfam" id="PF01381">
    <property type="entry name" value="HTH_3"/>
    <property type="match status" value="1"/>
</dbReference>
<dbReference type="PIRSF" id="PIRSF005978">
    <property type="entry name" value="HTH_MJ0621_prd"/>
    <property type="match status" value="1"/>
</dbReference>
<dbReference type="SMART" id="SM00530">
    <property type="entry name" value="HTH_XRE"/>
    <property type="match status" value="1"/>
</dbReference>
<dbReference type="SUPFAM" id="SSF47413">
    <property type="entry name" value="lambda repressor-like DNA-binding domains"/>
    <property type="match status" value="1"/>
</dbReference>
<dbReference type="PROSITE" id="PS50943">
    <property type="entry name" value="HTH_CROC1"/>
    <property type="match status" value="1"/>
</dbReference>
<keyword id="KW-0238">DNA-binding</keyword>
<keyword id="KW-1185">Reference proteome</keyword>
<keyword id="KW-0804">Transcription</keyword>
<keyword id="KW-0805">Transcription regulation</keyword>
<feature type="chain" id="PRO_0000149792" description="Uncharacterized HTH-type transcriptional regulator MJ0621">
    <location>
        <begin position="1"/>
        <end position="172"/>
    </location>
</feature>
<feature type="domain" description="HTH cro/C1-type" evidence="1">
    <location>
        <begin position="21"/>
        <end position="75"/>
    </location>
</feature>
<feature type="DNA-binding region" description="H-T-H motif" evidence="1">
    <location>
        <begin position="32"/>
        <end position="51"/>
    </location>
</feature>
<sequence>MKACERLLLKIESQEKFVEEFKRILLELGLTLKEFSEISGIPYSTLYKVIQGKDFRVSTLIKILKTIRSFEKDENIDTIAIIAARPALNKITTRKIGINGKSYLIKEYPANSLEECIVAAVRAEREGVKGIVCAPIVSATIEKIVNVPVAVIIPEKDAFMKALEIIAKKINE</sequence>
<organism>
    <name type="scientific">Methanocaldococcus jannaschii (strain ATCC 43067 / DSM 2661 / JAL-1 / JCM 10045 / NBRC 100440)</name>
    <name type="common">Methanococcus jannaschii</name>
    <dbReference type="NCBI Taxonomy" id="243232"/>
    <lineage>
        <taxon>Archaea</taxon>
        <taxon>Methanobacteriati</taxon>
        <taxon>Methanobacteriota</taxon>
        <taxon>Methanomada group</taxon>
        <taxon>Methanococci</taxon>
        <taxon>Methanococcales</taxon>
        <taxon>Methanocaldococcaceae</taxon>
        <taxon>Methanocaldococcus</taxon>
    </lineage>
</organism>
<reference key="1">
    <citation type="journal article" date="1996" name="Science">
        <title>Complete genome sequence of the methanogenic archaeon, Methanococcus jannaschii.</title>
        <authorList>
            <person name="Bult C.J."/>
            <person name="White O."/>
            <person name="Olsen G.J."/>
            <person name="Zhou L."/>
            <person name="Fleischmann R.D."/>
            <person name="Sutton G.G."/>
            <person name="Blake J.A."/>
            <person name="FitzGerald L.M."/>
            <person name="Clayton R.A."/>
            <person name="Gocayne J.D."/>
            <person name="Kerlavage A.R."/>
            <person name="Dougherty B.A."/>
            <person name="Tomb J.-F."/>
            <person name="Adams M.D."/>
            <person name="Reich C.I."/>
            <person name="Overbeek R."/>
            <person name="Kirkness E.F."/>
            <person name="Weinstock K.G."/>
            <person name="Merrick J.M."/>
            <person name="Glodek A."/>
            <person name="Scott J.L."/>
            <person name="Geoghagen N.S.M."/>
            <person name="Weidman J.F."/>
            <person name="Fuhrmann J.L."/>
            <person name="Nguyen D."/>
            <person name="Utterback T.R."/>
            <person name="Kelley J.M."/>
            <person name="Peterson J.D."/>
            <person name="Sadow P.W."/>
            <person name="Hanna M.C."/>
            <person name="Cotton M.D."/>
            <person name="Roberts K.M."/>
            <person name="Hurst M.A."/>
            <person name="Kaine B.P."/>
            <person name="Borodovsky M."/>
            <person name="Klenk H.-P."/>
            <person name="Fraser C.M."/>
            <person name="Smith H.O."/>
            <person name="Woese C.R."/>
            <person name="Venter J.C."/>
        </authorList>
    </citation>
    <scope>NUCLEOTIDE SEQUENCE [LARGE SCALE GENOMIC DNA]</scope>
    <source>
        <strain>ATCC 43067 / DSM 2661 / JAL-1 / JCM 10045 / NBRC 100440</strain>
    </source>
</reference>
<proteinExistence type="predicted"/>
<gene>
    <name type="ordered locus">MJ0621</name>
</gene>
<protein>
    <recommendedName>
        <fullName>Uncharacterized HTH-type transcriptional regulator MJ0621</fullName>
    </recommendedName>
</protein>
<accession>Q58038</accession>
<evidence type="ECO:0000255" key="1">
    <source>
        <dbReference type="PROSITE-ProRule" id="PRU00257"/>
    </source>
</evidence>